<organism>
    <name type="scientific">Vibrio cholerae serotype O1 (strain ATCC 39315 / El Tor Inaba N16961)</name>
    <dbReference type="NCBI Taxonomy" id="243277"/>
    <lineage>
        <taxon>Bacteria</taxon>
        <taxon>Pseudomonadati</taxon>
        <taxon>Pseudomonadota</taxon>
        <taxon>Gammaproteobacteria</taxon>
        <taxon>Vibrionales</taxon>
        <taxon>Vibrionaceae</taxon>
        <taxon>Vibrio</taxon>
    </lineage>
</organism>
<comment type="similarity">
    <text evidence="1">Belongs to the bacterial ribosomal protein bS16 family.</text>
</comment>
<name>RS16_VIBCH</name>
<feature type="chain" id="PRO_0000167278" description="Small ribosomal subunit protein bS16">
    <location>
        <begin position="1"/>
        <end position="82"/>
    </location>
</feature>
<reference key="1">
    <citation type="journal article" date="2000" name="Nature">
        <title>DNA sequence of both chromosomes of the cholera pathogen Vibrio cholerae.</title>
        <authorList>
            <person name="Heidelberg J.F."/>
            <person name="Eisen J.A."/>
            <person name="Nelson W.C."/>
            <person name="Clayton R.A."/>
            <person name="Gwinn M.L."/>
            <person name="Dodson R.J."/>
            <person name="Haft D.H."/>
            <person name="Hickey E.K."/>
            <person name="Peterson J.D."/>
            <person name="Umayam L.A."/>
            <person name="Gill S.R."/>
            <person name="Nelson K.E."/>
            <person name="Read T.D."/>
            <person name="Tettelin H."/>
            <person name="Richardson D.L."/>
            <person name="Ermolaeva M.D."/>
            <person name="Vamathevan J.J."/>
            <person name="Bass S."/>
            <person name="Qin H."/>
            <person name="Dragoi I."/>
            <person name="Sellers P."/>
            <person name="McDonald L.A."/>
            <person name="Utterback T.R."/>
            <person name="Fleischmann R.D."/>
            <person name="Nierman W.C."/>
            <person name="White O."/>
            <person name="Salzberg S.L."/>
            <person name="Smith H.O."/>
            <person name="Colwell R.R."/>
            <person name="Mekalanos J.J."/>
            <person name="Venter J.C."/>
            <person name="Fraser C.M."/>
        </authorList>
    </citation>
    <scope>NUCLEOTIDE SEQUENCE [LARGE SCALE GENOMIC DNA]</scope>
    <source>
        <strain>ATCC 39315 / El Tor Inaba N16961</strain>
    </source>
</reference>
<evidence type="ECO:0000255" key="1">
    <source>
        <dbReference type="HAMAP-Rule" id="MF_00385"/>
    </source>
</evidence>
<evidence type="ECO:0000305" key="2"/>
<gene>
    <name evidence="1" type="primary">rpsP</name>
    <name type="ordered locus">VC_0561</name>
</gene>
<keyword id="KW-1185">Reference proteome</keyword>
<keyword id="KW-0687">Ribonucleoprotein</keyword>
<keyword id="KW-0689">Ribosomal protein</keyword>
<dbReference type="EMBL" id="AE003852">
    <property type="protein sequence ID" value="AAF93729.1"/>
    <property type="molecule type" value="Genomic_DNA"/>
</dbReference>
<dbReference type="PIR" id="A82307">
    <property type="entry name" value="A82307"/>
</dbReference>
<dbReference type="RefSeq" id="NP_230212.1">
    <property type="nucleotide sequence ID" value="NC_002505.1"/>
</dbReference>
<dbReference type="RefSeq" id="WP_000256449.1">
    <property type="nucleotide sequence ID" value="NZ_LT906614.1"/>
</dbReference>
<dbReference type="SMR" id="Q9KUG0"/>
<dbReference type="STRING" id="243277.VC_0561"/>
<dbReference type="DNASU" id="2615238"/>
<dbReference type="EnsemblBacteria" id="AAF93729">
    <property type="protein sequence ID" value="AAF93729"/>
    <property type="gene ID" value="VC_0561"/>
</dbReference>
<dbReference type="GeneID" id="94014658"/>
<dbReference type="KEGG" id="vch:VC_0561"/>
<dbReference type="PATRIC" id="fig|243277.26.peg.536"/>
<dbReference type="eggNOG" id="COG0228">
    <property type="taxonomic scope" value="Bacteria"/>
</dbReference>
<dbReference type="HOGENOM" id="CLU_100590_5_1_6"/>
<dbReference type="Proteomes" id="UP000000584">
    <property type="component" value="Chromosome 1"/>
</dbReference>
<dbReference type="GO" id="GO:0005737">
    <property type="term" value="C:cytoplasm"/>
    <property type="evidence" value="ECO:0007669"/>
    <property type="project" value="UniProtKB-ARBA"/>
</dbReference>
<dbReference type="GO" id="GO:0015935">
    <property type="term" value="C:small ribosomal subunit"/>
    <property type="evidence" value="ECO:0000318"/>
    <property type="project" value="GO_Central"/>
</dbReference>
<dbReference type="GO" id="GO:0003735">
    <property type="term" value="F:structural constituent of ribosome"/>
    <property type="evidence" value="ECO:0000318"/>
    <property type="project" value="GO_Central"/>
</dbReference>
<dbReference type="GO" id="GO:0006412">
    <property type="term" value="P:translation"/>
    <property type="evidence" value="ECO:0007669"/>
    <property type="project" value="UniProtKB-UniRule"/>
</dbReference>
<dbReference type="FunFam" id="3.30.1320.10:FF:000001">
    <property type="entry name" value="30S ribosomal protein S16"/>
    <property type="match status" value="1"/>
</dbReference>
<dbReference type="Gene3D" id="3.30.1320.10">
    <property type="match status" value="1"/>
</dbReference>
<dbReference type="HAMAP" id="MF_00385">
    <property type="entry name" value="Ribosomal_bS16"/>
    <property type="match status" value="1"/>
</dbReference>
<dbReference type="InterPro" id="IPR000307">
    <property type="entry name" value="Ribosomal_bS16"/>
</dbReference>
<dbReference type="InterPro" id="IPR020592">
    <property type="entry name" value="Ribosomal_bS16_CS"/>
</dbReference>
<dbReference type="InterPro" id="IPR023803">
    <property type="entry name" value="Ribosomal_bS16_dom_sf"/>
</dbReference>
<dbReference type="NCBIfam" id="TIGR00002">
    <property type="entry name" value="S16"/>
    <property type="match status" value="1"/>
</dbReference>
<dbReference type="PANTHER" id="PTHR12919">
    <property type="entry name" value="30S RIBOSOMAL PROTEIN S16"/>
    <property type="match status" value="1"/>
</dbReference>
<dbReference type="PANTHER" id="PTHR12919:SF20">
    <property type="entry name" value="SMALL RIBOSOMAL SUBUNIT PROTEIN BS16M"/>
    <property type="match status" value="1"/>
</dbReference>
<dbReference type="Pfam" id="PF00886">
    <property type="entry name" value="Ribosomal_S16"/>
    <property type="match status" value="1"/>
</dbReference>
<dbReference type="SUPFAM" id="SSF54565">
    <property type="entry name" value="Ribosomal protein S16"/>
    <property type="match status" value="1"/>
</dbReference>
<dbReference type="PROSITE" id="PS00732">
    <property type="entry name" value="RIBOSOMAL_S16"/>
    <property type="match status" value="1"/>
</dbReference>
<proteinExistence type="inferred from homology"/>
<protein>
    <recommendedName>
        <fullName evidence="1">Small ribosomal subunit protein bS16</fullName>
    </recommendedName>
    <alternativeName>
        <fullName evidence="2">30S ribosomal protein S16</fullName>
    </alternativeName>
</protein>
<accession>Q9KUG0</accession>
<sequence>MVTIRLARHGAKKRPFYQIVVADSRNSATGRFIEKVGFFNPTATGQEEGLRLDLDRVNHWVSQGASLSDRVAQLVKTAQKAA</sequence>